<feature type="chain" id="PRO_0000230717" description="Small ribosomal subunit protein uS3">
    <location>
        <begin position="1"/>
        <end position="228"/>
    </location>
</feature>
<feature type="domain" description="KH type-2" evidence="1">
    <location>
        <begin position="39"/>
        <end position="107"/>
    </location>
</feature>
<sequence length="228" mass="25753">MGQKVHPIGIRLGIVKEHTSVWYADGRTYADYLFADLKVREYLQDKLKSASVSRIDIHRPAQTARITIHTARPGIVIGKKGEDVEKLRQDLTKQMGVPVHINIEEIRKPELDGMLVAQSVAQQLERRVMFRRAMKRAVQNAMRIGAKGIKIQVSGRLGGAEIARTEWYREGRVPLHTLRADIDYANYEAHTTYGVIGVKVWIFKGEVIGGRQEELKPQAPAPRKKAAK</sequence>
<name>RS3_PSEPF</name>
<proteinExistence type="inferred from homology"/>
<keyword id="KW-0687">Ribonucleoprotein</keyword>
<keyword id="KW-0689">Ribosomal protein</keyword>
<keyword id="KW-0694">RNA-binding</keyword>
<keyword id="KW-0699">rRNA-binding</keyword>
<protein>
    <recommendedName>
        <fullName evidence="1">Small ribosomal subunit protein uS3</fullName>
    </recommendedName>
    <alternativeName>
        <fullName evidence="2">30S ribosomal protein S3</fullName>
    </alternativeName>
</protein>
<evidence type="ECO:0000255" key="1">
    <source>
        <dbReference type="HAMAP-Rule" id="MF_01309"/>
    </source>
</evidence>
<evidence type="ECO:0000305" key="2"/>
<gene>
    <name evidence="1" type="primary">rpsC</name>
    <name type="ordered locus">Pfl01_5073</name>
</gene>
<dbReference type="EMBL" id="CP000094">
    <property type="protein sequence ID" value="ABA76810.1"/>
    <property type="molecule type" value="Genomic_DNA"/>
</dbReference>
<dbReference type="RefSeq" id="WP_003176422.1">
    <property type="nucleotide sequence ID" value="NC_007492.2"/>
</dbReference>
<dbReference type="SMR" id="Q3K5Z4"/>
<dbReference type="GeneID" id="98113701"/>
<dbReference type="KEGG" id="pfo:Pfl01_5073"/>
<dbReference type="eggNOG" id="COG0092">
    <property type="taxonomic scope" value="Bacteria"/>
</dbReference>
<dbReference type="HOGENOM" id="CLU_058591_0_2_6"/>
<dbReference type="Proteomes" id="UP000002704">
    <property type="component" value="Chromosome"/>
</dbReference>
<dbReference type="GO" id="GO:0022627">
    <property type="term" value="C:cytosolic small ribosomal subunit"/>
    <property type="evidence" value="ECO:0007669"/>
    <property type="project" value="TreeGrafter"/>
</dbReference>
<dbReference type="GO" id="GO:0003729">
    <property type="term" value="F:mRNA binding"/>
    <property type="evidence" value="ECO:0007669"/>
    <property type="project" value="UniProtKB-UniRule"/>
</dbReference>
<dbReference type="GO" id="GO:0019843">
    <property type="term" value="F:rRNA binding"/>
    <property type="evidence" value="ECO:0007669"/>
    <property type="project" value="UniProtKB-UniRule"/>
</dbReference>
<dbReference type="GO" id="GO:0003735">
    <property type="term" value="F:structural constituent of ribosome"/>
    <property type="evidence" value="ECO:0007669"/>
    <property type="project" value="InterPro"/>
</dbReference>
<dbReference type="GO" id="GO:0006412">
    <property type="term" value="P:translation"/>
    <property type="evidence" value="ECO:0007669"/>
    <property type="project" value="UniProtKB-UniRule"/>
</dbReference>
<dbReference type="CDD" id="cd02412">
    <property type="entry name" value="KH-II_30S_S3"/>
    <property type="match status" value="1"/>
</dbReference>
<dbReference type="FunFam" id="3.30.1140.32:FF:000001">
    <property type="entry name" value="30S ribosomal protein S3"/>
    <property type="match status" value="1"/>
</dbReference>
<dbReference type="FunFam" id="3.30.300.20:FF:000001">
    <property type="entry name" value="30S ribosomal protein S3"/>
    <property type="match status" value="1"/>
</dbReference>
<dbReference type="Gene3D" id="3.30.300.20">
    <property type="match status" value="1"/>
</dbReference>
<dbReference type="Gene3D" id="3.30.1140.32">
    <property type="entry name" value="Ribosomal protein S3, C-terminal domain"/>
    <property type="match status" value="1"/>
</dbReference>
<dbReference type="HAMAP" id="MF_01309_B">
    <property type="entry name" value="Ribosomal_uS3_B"/>
    <property type="match status" value="1"/>
</dbReference>
<dbReference type="InterPro" id="IPR004087">
    <property type="entry name" value="KH_dom"/>
</dbReference>
<dbReference type="InterPro" id="IPR015946">
    <property type="entry name" value="KH_dom-like_a/b"/>
</dbReference>
<dbReference type="InterPro" id="IPR004044">
    <property type="entry name" value="KH_dom_type_2"/>
</dbReference>
<dbReference type="InterPro" id="IPR009019">
    <property type="entry name" value="KH_sf_prok-type"/>
</dbReference>
<dbReference type="InterPro" id="IPR036419">
    <property type="entry name" value="Ribosomal_S3_C_sf"/>
</dbReference>
<dbReference type="InterPro" id="IPR005704">
    <property type="entry name" value="Ribosomal_uS3_bac-typ"/>
</dbReference>
<dbReference type="InterPro" id="IPR001351">
    <property type="entry name" value="Ribosomal_uS3_C"/>
</dbReference>
<dbReference type="InterPro" id="IPR018280">
    <property type="entry name" value="Ribosomal_uS3_CS"/>
</dbReference>
<dbReference type="NCBIfam" id="TIGR01009">
    <property type="entry name" value="rpsC_bact"/>
    <property type="match status" value="1"/>
</dbReference>
<dbReference type="PANTHER" id="PTHR11760">
    <property type="entry name" value="30S/40S RIBOSOMAL PROTEIN S3"/>
    <property type="match status" value="1"/>
</dbReference>
<dbReference type="PANTHER" id="PTHR11760:SF19">
    <property type="entry name" value="SMALL RIBOSOMAL SUBUNIT PROTEIN US3C"/>
    <property type="match status" value="1"/>
</dbReference>
<dbReference type="Pfam" id="PF07650">
    <property type="entry name" value="KH_2"/>
    <property type="match status" value="1"/>
</dbReference>
<dbReference type="Pfam" id="PF00189">
    <property type="entry name" value="Ribosomal_S3_C"/>
    <property type="match status" value="1"/>
</dbReference>
<dbReference type="SMART" id="SM00322">
    <property type="entry name" value="KH"/>
    <property type="match status" value="1"/>
</dbReference>
<dbReference type="SUPFAM" id="SSF54814">
    <property type="entry name" value="Prokaryotic type KH domain (KH-domain type II)"/>
    <property type="match status" value="1"/>
</dbReference>
<dbReference type="SUPFAM" id="SSF54821">
    <property type="entry name" value="Ribosomal protein S3 C-terminal domain"/>
    <property type="match status" value="1"/>
</dbReference>
<dbReference type="PROSITE" id="PS50823">
    <property type="entry name" value="KH_TYPE_2"/>
    <property type="match status" value="1"/>
</dbReference>
<dbReference type="PROSITE" id="PS00548">
    <property type="entry name" value="RIBOSOMAL_S3"/>
    <property type="match status" value="1"/>
</dbReference>
<reference key="1">
    <citation type="journal article" date="2009" name="Genome Biol.">
        <title>Genomic and genetic analyses of diversity and plant interactions of Pseudomonas fluorescens.</title>
        <authorList>
            <person name="Silby M.W."/>
            <person name="Cerdeno-Tarraga A.M."/>
            <person name="Vernikos G.S."/>
            <person name="Giddens S.R."/>
            <person name="Jackson R.W."/>
            <person name="Preston G.M."/>
            <person name="Zhang X.-X."/>
            <person name="Moon C.D."/>
            <person name="Gehrig S.M."/>
            <person name="Godfrey S.A.C."/>
            <person name="Knight C.G."/>
            <person name="Malone J.G."/>
            <person name="Robinson Z."/>
            <person name="Spiers A.J."/>
            <person name="Harris S."/>
            <person name="Challis G.L."/>
            <person name="Yaxley A.M."/>
            <person name="Harris D."/>
            <person name="Seeger K."/>
            <person name="Murphy L."/>
            <person name="Rutter S."/>
            <person name="Squares R."/>
            <person name="Quail M.A."/>
            <person name="Saunders E."/>
            <person name="Mavromatis K."/>
            <person name="Brettin T.S."/>
            <person name="Bentley S.D."/>
            <person name="Hothersall J."/>
            <person name="Stephens E."/>
            <person name="Thomas C.M."/>
            <person name="Parkhill J."/>
            <person name="Levy S.B."/>
            <person name="Rainey P.B."/>
            <person name="Thomson N.R."/>
        </authorList>
    </citation>
    <scope>NUCLEOTIDE SEQUENCE [LARGE SCALE GENOMIC DNA]</scope>
    <source>
        <strain>Pf0-1</strain>
    </source>
</reference>
<comment type="function">
    <text evidence="1">Binds the lower part of the 30S subunit head. Binds mRNA in the 70S ribosome, positioning it for translation.</text>
</comment>
<comment type="subunit">
    <text evidence="1">Part of the 30S ribosomal subunit. Forms a tight complex with proteins S10 and S14.</text>
</comment>
<comment type="similarity">
    <text evidence="1">Belongs to the universal ribosomal protein uS3 family.</text>
</comment>
<organism>
    <name type="scientific">Pseudomonas fluorescens (strain Pf0-1)</name>
    <dbReference type="NCBI Taxonomy" id="205922"/>
    <lineage>
        <taxon>Bacteria</taxon>
        <taxon>Pseudomonadati</taxon>
        <taxon>Pseudomonadota</taxon>
        <taxon>Gammaproteobacteria</taxon>
        <taxon>Pseudomonadales</taxon>
        <taxon>Pseudomonadaceae</taxon>
        <taxon>Pseudomonas</taxon>
    </lineage>
</organism>
<accession>Q3K5Z4</accession>